<evidence type="ECO:0000255" key="1">
    <source>
        <dbReference type="HAMAP-Rule" id="MF_01270"/>
    </source>
</evidence>
<reference key="1">
    <citation type="journal article" date="2001" name="Nature">
        <title>Complete genome sequence of a multiple drug resistant Salmonella enterica serovar Typhi CT18.</title>
        <authorList>
            <person name="Parkhill J."/>
            <person name="Dougan G."/>
            <person name="James K.D."/>
            <person name="Thomson N.R."/>
            <person name="Pickard D."/>
            <person name="Wain J."/>
            <person name="Churcher C.M."/>
            <person name="Mungall K.L."/>
            <person name="Bentley S.D."/>
            <person name="Holden M.T.G."/>
            <person name="Sebaihia M."/>
            <person name="Baker S."/>
            <person name="Basham D."/>
            <person name="Brooks K."/>
            <person name="Chillingworth T."/>
            <person name="Connerton P."/>
            <person name="Cronin A."/>
            <person name="Davis P."/>
            <person name="Davies R.M."/>
            <person name="Dowd L."/>
            <person name="White N."/>
            <person name="Farrar J."/>
            <person name="Feltwell T."/>
            <person name="Hamlin N."/>
            <person name="Haque A."/>
            <person name="Hien T.T."/>
            <person name="Holroyd S."/>
            <person name="Jagels K."/>
            <person name="Krogh A."/>
            <person name="Larsen T.S."/>
            <person name="Leather S."/>
            <person name="Moule S."/>
            <person name="O'Gaora P."/>
            <person name="Parry C."/>
            <person name="Quail M.A."/>
            <person name="Rutherford K.M."/>
            <person name="Simmonds M."/>
            <person name="Skelton J."/>
            <person name="Stevens K."/>
            <person name="Whitehead S."/>
            <person name="Barrell B.G."/>
        </authorList>
    </citation>
    <scope>NUCLEOTIDE SEQUENCE [LARGE SCALE GENOMIC DNA]</scope>
    <source>
        <strain>CT18</strain>
    </source>
</reference>
<reference key="2">
    <citation type="journal article" date="2003" name="J. Bacteriol.">
        <title>Comparative genomics of Salmonella enterica serovar Typhi strains Ty2 and CT18.</title>
        <authorList>
            <person name="Deng W."/>
            <person name="Liou S.-R."/>
            <person name="Plunkett G. III"/>
            <person name="Mayhew G.F."/>
            <person name="Rose D.J."/>
            <person name="Burland V."/>
            <person name="Kodoyianni V."/>
            <person name="Schwartz D.C."/>
            <person name="Blattner F.R."/>
        </authorList>
    </citation>
    <scope>NUCLEOTIDE SEQUENCE [LARGE SCALE GENOMIC DNA]</scope>
    <source>
        <strain>ATCC 700931 / Ty2</strain>
    </source>
</reference>
<protein>
    <recommendedName>
        <fullName evidence="1">Anhydro-N-acetylmuramic acid kinase</fullName>
        <ecNumber evidence="1">2.7.1.170</ecNumber>
    </recommendedName>
    <alternativeName>
        <fullName evidence="1">AnhMurNAc kinase</fullName>
    </alternativeName>
</protein>
<proteinExistence type="inferred from homology"/>
<dbReference type="EC" id="2.7.1.170" evidence="1"/>
<dbReference type="EMBL" id="AL513382">
    <property type="protein sequence ID" value="CAD01921.1"/>
    <property type="molecule type" value="Genomic_DNA"/>
</dbReference>
<dbReference type="EMBL" id="AE014613">
    <property type="protein sequence ID" value="AAO68964.1"/>
    <property type="molecule type" value="Genomic_DNA"/>
</dbReference>
<dbReference type="RefSeq" id="NP_456084.1">
    <property type="nucleotide sequence ID" value="NC_003198.1"/>
</dbReference>
<dbReference type="RefSeq" id="WP_000835021.1">
    <property type="nucleotide sequence ID" value="NZ_WSUR01000011.1"/>
</dbReference>
<dbReference type="SMR" id="Q8Z6Q0"/>
<dbReference type="STRING" id="220341.gene:17585611"/>
<dbReference type="KEGG" id="stt:t1314"/>
<dbReference type="KEGG" id="sty:STY1676"/>
<dbReference type="PATRIC" id="fig|220341.7.peg.1686"/>
<dbReference type="eggNOG" id="COG2377">
    <property type="taxonomic scope" value="Bacteria"/>
</dbReference>
<dbReference type="HOGENOM" id="CLU_038782_0_0_6"/>
<dbReference type="OMA" id="TGPGNMV"/>
<dbReference type="OrthoDB" id="9763949at2"/>
<dbReference type="UniPathway" id="UPA00343"/>
<dbReference type="UniPathway" id="UPA00544"/>
<dbReference type="Proteomes" id="UP000000541">
    <property type="component" value="Chromosome"/>
</dbReference>
<dbReference type="Proteomes" id="UP000002670">
    <property type="component" value="Chromosome"/>
</dbReference>
<dbReference type="GO" id="GO:0005524">
    <property type="term" value="F:ATP binding"/>
    <property type="evidence" value="ECO:0007669"/>
    <property type="project" value="UniProtKB-UniRule"/>
</dbReference>
<dbReference type="GO" id="GO:0016301">
    <property type="term" value="F:kinase activity"/>
    <property type="evidence" value="ECO:0007669"/>
    <property type="project" value="UniProtKB-KW"/>
</dbReference>
<dbReference type="GO" id="GO:0016773">
    <property type="term" value="F:phosphotransferase activity, alcohol group as acceptor"/>
    <property type="evidence" value="ECO:0007669"/>
    <property type="project" value="UniProtKB-UniRule"/>
</dbReference>
<dbReference type="GO" id="GO:0097175">
    <property type="term" value="P:1,6-anhydro-N-acetyl-beta-muramic acid catabolic process"/>
    <property type="evidence" value="ECO:0007669"/>
    <property type="project" value="UniProtKB-UniRule"/>
</dbReference>
<dbReference type="GO" id="GO:0006040">
    <property type="term" value="P:amino sugar metabolic process"/>
    <property type="evidence" value="ECO:0007669"/>
    <property type="project" value="InterPro"/>
</dbReference>
<dbReference type="GO" id="GO:0009254">
    <property type="term" value="P:peptidoglycan turnover"/>
    <property type="evidence" value="ECO:0007669"/>
    <property type="project" value="UniProtKB-UniRule"/>
</dbReference>
<dbReference type="CDD" id="cd24050">
    <property type="entry name" value="ASKHA_NBD_ANMK"/>
    <property type="match status" value="1"/>
</dbReference>
<dbReference type="Gene3D" id="3.30.420.40">
    <property type="match status" value="2"/>
</dbReference>
<dbReference type="HAMAP" id="MF_01270">
    <property type="entry name" value="AnhMurNAc_kinase"/>
    <property type="match status" value="1"/>
</dbReference>
<dbReference type="InterPro" id="IPR005338">
    <property type="entry name" value="Anhydro_N_Ac-Mur_kinase"/>
</dbReference>
<dbReference type="InterPro" id="IPR043129">
    <property type="entry name" value="ATPase_NBD"/>
</dbReference>
<dbReference type="NCBIfam" id="NF007138">
    <property type="entry name" value="PRK09585.1-1"/>
    <property type="match status" value="1"/>
</dbReference>
<dbReference type="NCBIfam" id="NF007139">
    <property type="entry name" value="PRK09585.1-3"/>
    <property type="match status" value="1"/>
</dbReference>
<dbReference type="NCBIfam" id="NF007148">
    <property type="entry name" value="PRK09585.3-2"/>
    <property type="match status" value="1"/>
</dbReference>
<dbReference type="PANTHER" id="PTHR30605">
    <property type="entry name" value="ANHYDRO-N-ACETYLMURAMIC ACID KINASE"/>
    <property type="match status" value="1"/>
</dbReference>
<dbReference type="PANTHER" id="PTHR30605:SF0">
    <property type="entry name" value="ANHYDRO-N-ACETYLMURAMIC ACID KINASE"/>
    <property type="match status" value="1"/>
</dbReference>
<dbReference type="Pfam" id="PF03702">
    <property type="entry name" value="AnmK"/>
    <property type="match status" value="1"/>
</dbReference>
<dbReference type="SUPFAM" id="SSF53067">
    <property type="entry name" value="Actin-like ATPase domain"/>
    <property type="match status" value="1"/>
</dbReference>
<feature type="chain" id="PRO_0000250055" description="Anhydro-N-acetylmuramic acid kinase">
    <location>
        <begin position="1"/>
        <end position="373"/>
    </location>
</feature>
<feature type="binding site" evidence="1">
    <location>
        <begin position="12"/>
        <end position="19"/>
    </location>
    <ligand>
        <name>ATP</name>
        <dbReference type="ChEBI" id="CHEBI:30616"/>
    </ligand>
</feature>
<gene>
    <name evidence="1" type="primary">anmK</name>
    <name type="ordered locus">STY1676</name>
    <name type="ordered locus">t1314</name>
</gene>
<accession>Q8Z6Q0</accession>
<accession>Q7CA22</accession>
<organism>
    <name type="scientific">Salmonella typhi</name>
    <dbReference type="NCBI Taxonomy" id="90370"/>
    <lineage>
        <taxon>Bacteria</taxon>
        <taxon>Pseudomonadati</taxon>
        <taxon>Pseudomonadota</taxon>
        <taxon>Gammaproteobacteria</taxon>
        <taxon>Enterobacterales</taxon>
        <taxon>Enterobacteriaceae</taxon>
        <taxon>Salmonella</taxon>
    </lineage>
</organism>
<keyword id="KW-0067">ATP-binding</keyword>
<keyword id="KW-0119">Carbohydrate metabolism</keyword>
<keyword id="KW-0418">Kinase</keyword>
<keyword id="KW-0547">Nucleotide-binding</keyword>
<keyword id="KW-0808">Transferase</keyword>
<sequence>MKSGRFIGVMSGTSLDGVDVVLAAIDETMVAQQASLTWPIPVHLKKGILDICQGQPLTLSQLGQLDTQLGRLFAQAVNALLAQQRLQPRDIVAIGCHGQTVWHEPTGEAPHTLQIGDNNHIVAHTGITVVGDFRRRDIALGGQGAPLVPAFHHALLGHPTEKRMVLNIGGIANLSLLFPGQAVRGYDTGPGNMLMDAWIWRQCAQPYDKDAAWAKEGQVILPLLQKMLRDPYFAASAPKSTGREYFNYGWLERHLTAFPGADARDVQATLAELTAVSIAQQVLLNGGCERLMVCGGGSRNPLVMARLAALLPGIEVSTTDKAGISGDDMEALAFAWLAWRTLAGLPGNLPSVTGATEASVLGAIYPANPITQS</sequence>
<comment type="function">
    <text evidence="1">Catalyzes the specific phosphorylation of 1,6-anhydro-N-acetylmuramic acid (anhMurNAc) with the simultaneous cleavage of the 1,6-anhydro ring, generating MurNAc-6-P. Is required for the utilization of anhMurNAc either imported from the medium or derived from its own cell wall murein, and thus plays a role in cell wall recycling.</text>
</comment>
<comment type="catalytic activity">
    <reaction evidence="1">
        <text>1,6-anhydro-N-acetyl-beta-muramate + ATP + H2O = N-acetyl-D-muramate 6-phosphate + ADP + H(+)</text>
        <dbReference type="Rhea" id="RHEA:24952"/>
        <dbReference type="ChEBI" id="CHEBI:15377"/>
        <dbReference type="ChEBI" id="CHEBI:15378"/>
        <dbReference type="ChEBI" id="CHEBI:30616"/>
        <dbReference type="ChEBI" id="CHEBI:58690"/>
        <dbReference type="ChEBI" id="CHEBI:58722"/>
        <dbReference type="ChEBI" id="CHEBI:456216"/>
        <dbReference type="EC" id="2.7.1.170"/>
    </reaction>
</comment>
<comment type="pathway">
    <text evidence="1">Amino-sugar metabolism; 1,6-anhydro-N-acetylmuramate degradation.</text>
</comment>
<comment type="pathway">
    <text evidence="1">Cell wall biogenesis; peptidoglycan recycling.</text>
</comment>
<comment type="similarity">
    <text evidence="1">Belongs to the anhydro-N-acetylmuramic acid kinase family.</text>
</comment>
<name>ANMK_SALTI</name>